<dbReference type="EC" id="7.1.1.9"/>
<dbReference type="EMBL" id="L07544">
    <property type="protein sequence ID" value="AAA31876.1"/>
    <property type="molecule type" value="mRNA"/>
</dbReference>
<dbReference type="EMBL" id="M10126">
    <property type="status" value="NOT_ANNOTATED_CDS"/>
    <property type="molecule type" value="Genomic_DNA"/>
</dbReference>
<dbReference type="PIR" id="I22848">
    <property type="entry name" value="I22848"/>
</dbReference>
<dbReference type="SMR" id="P14545"/>
<dbReference type="GO" id="GO:0005743">
    <property type="term" value="C:mitochondrial inner membrane"/>
    <property type="evidence" value="ECO:0007669"/>
    <property type="project" value="UniProtKB-SubCell"/>
</dbReference>
<dbReference type="GO" id="GO:0005507">
    <property type="term" value="F:copper ion binding"/>
    <property type="evidence" value="ECO:0007669"/>
    <property type="project" value="InterPro"/>
</dbReference>
<dbReference type="GO" id="GO:0004129">
    <property type="term" value="F:cytochrome-c oxidase activity"/>
    <property type="evidence" value="ECO:0007669"/>
    <property type="project" value="UniProtKB-EC"/>
</dbReference>
<dbReference type="GO" id="GO:0042773">
    <property type="term" value="P:ATP synthesis coupled electron transport"/>
    <property type="evidence" value="ECO:0007669"/>
    <property type="project" value="TreeGrafter"/>
</dbReference>
<dbReference type="Gene3D" id="1.10.287.90">
    <property type="match status" value="1"/>
</dbReference>
<dbReference type="Gene3D" id="2.60.40.420">
    <property type="entry name" value="Cupredoxins - blue copper proteins"/>
    <property type="match status" value="1"/>
</dbReference>
<dbReference type="InterPro" id="IPR045187">
    <property type="entry name" value="CcO_II"/>
</dbReference>
<dbReference type="InterPro" id="IPR002429">
    <property type="entry name" value="CcO_II-like_C"/>
</dbReference>
<dbReference type="InterPro" id="IPR001505">
    <property type="entry name" value="Copper_CuA"/>
</dbReference>
<dbReference type="InterPro" id="IPR008972">
    <property type="entry name" value="Cupredoxin"/>
</dbReference>
<dbReference type="InterPro" id="IPR036257">
    <property type="entry name" value="Cyt_c_oxidase_su2_TM_sf"/>
</dbReference>
<dbReference type="PANTHER" id="PTHR22888:SF9">
    <property type="entry name" value="CYTOCHROME C OXIDASE SUBUNIT 2"/>
    <property type="match status" value="1"/>
</dbReference>
<dbReference type="PANTHER" id="PTHR22888">
    <property type="entry name" value="CYTOCHROME C OXIDASE, SUBUNIT II"/>
    <property type="match status" value="1"/>
</dbReference>
<dbReference type="Pfam" id="PF00116">
    <property type="entry name" value="COX2"/>
    <property type="match status" value="1"/>
</dbReference>
<dbReference type="PRINTS" id="PR01166">
    <property type="entry name" value="CYCOXIDASEII"/>
</dbReference>
<dbReference type="SUPFAM" id="SSF49503">
    <property type="entry name" value="Cupredoxins"/>
    <property type="match status" value="1"/>
</dbReference>
<dbReference type="PROSITE" id="PS00078">
    <property type="entry name" value="COX2"/>
    <property type="match status" value="1"/>
</dbReference>
<dbReference type="PROSITE" id="PS50857">
    <property type="entry name" value="COX2_CUA"/>
    <property type="match status" value="1"/>
</dbReference>
<organism>
    <name type="scientific">Leishmania tarentolae</name>
    <name type="common">Sauroleishmania tarentolae</name>
    <dbReference type="NCBI Taxonomy" id="5689"/>
    <lineage>
        <taxon>Eukaryota</taxon>
        <taxon>Discoba</taxon>
        <taxon>Euglenozoa</taxon>
        <taxon>Kinetoplastea</taxon>
        <taxon>Metakinetoplastina</taxon>
        <taxon>Trypanosomatida</taxon>
        <taxon>Trypanosomatidae</taxon>
        <taxon>Leishmaniinae</taxon>
        <taxon>Leishmania</taxon>
        <taxon>lizard Leishmania</taxon>
    </lineage>
</organism>
<name>COX2_LEITA</name>
<comment type="function">
    <text evidence="1">Component of the cytochrome c oxidase, the last enzyme in the mitochondrial electron transport chain which drives oxidative phosphorylation. The respiratory chain contains 3 multisubunit complexes succinate dehydrogenase (complex II, CII), ubiquinol-cytochrome c oxidoreductase (cytochrome b-c1 complex, complex III, CIII) and cytochrome c oxidase (complex IV, CIV), that cooperate to transfer electrons derived from NADH and succinate to molecular oxygen, creating an electrochemical gradient over the inner membrane that drives transmembrane transport and the ATP synthase. Cytochrome c oxidase is the component of the respiratory chain that catalyzes the reduction of oxygen to water. Electrons originating from reduced cytochrome c in the intermembrane space (IMS) are transferred via the dinuclear copper A center (CU(A)) of subunit 2 and heme A of subunit 1 to the active site in subunit 1, a binuclear center (BNC) formed by heme A3 and copper B (CU(B)). The BNC reduces molecular oxygen to 2 water molecules using 4 electrons from cytochrome c in the IMS and 4 protons from the mitochondrial matrix.</text>
</comment>
<comment type="catalytic activity">
    <reaction evidence="1">
        <text>4 Fe(II)-[cytochrome c] + O2 + 8 H(+)(in) = 4 Fe(III)-[cytochrome c] + 2 H2O + 4 H(+)(out)</text>
        <dbReference type="Rhea" id="RHEA:11436"/>
        <dbReference type="Rhea" id="RHEA-COMP:10350"/>
        <dbReference type="Rhea" id="RHEA-COMP:14399"/>
        <dbReference type="ChEBI" id="CHEBI:15377"/>
        <dbReference type="ChEBI" id="CHEBI:15378"/>
        <dbReference type="ChEBI" id="CHEBI:15379"/>
        <dbReference type="ChEBI" id="CHEBI:29033"/>
        <dbReference type="ChEBI" id="CHEBI:29034"/>
        <dbReference type="EC" id="7.1.1.9"/>
    </reaction>
    <physiologicalReaction direction="left-to-right" evidence="1">
        <dbReference type="Rhea" id="RHEA:11437"/>
    </physiologicalReaction>
</comment>
<comment type="cofactor">
    <cofactor evidence="1">
        <name>Cu cation</name>
        <dbReference type="ChEBI" id="CHEBI:23378"/>
    </cofactor>
    <text evidence="1">Binds a dinuclear copper A center per subunit.</text>
</comment>
<comment type="subunit">
    <text evidence="1">Component of the cytochrome c oxidase (complex IV, CIV), a multisubunit enzyme composed of a catalytic core of 3 subunits and several supernumerary subunits. The complex exists as a monomer or a dimer and forms supercomplexes (SCs) in the inner mitochondrial membrane with ubiquinol-cytochrome c oxidoreductase (cytochrome b-c1 complex, complex III, CIII).</text>
</comment>
<comment type="subcellular location">
    <subcellularLocation>
        <location evidence="1">Mitochondrion inner membrane</location>
        <topology evidence="1">Multi-pass membrane protein</topology>
    </subcellularLocation>
</comment>
<comment type="RNA editing" locationType="Not_applicable">
    <text evidence="3">Some positions are modified by RNA editing via nucleotide insertion.</text>
</comment>
<comment type="similarity">
    <text evidence="4">Belongs to the cytochrome c oxidase subunit 2 family.</text>
</comment>
<proteinExistence type="evidence at transcript level"/>
<reference key="1">
    <citation type="journal article" date="1984" name="J. Biol. Chem.">
        <title>Sequences of six genes and several open reading frames in the kinetoplast maxicircle DNA of Leishmania tarentolae.</title>
        <authorList>
            <person name="de la Cruz V.F."/>
            <person name="Neckelmann N."/>
            <person name="Simpson L."/>
        </authorList>
    </citation>
    <scope>NUCLEOTIDE SEQUENCE [GENOMIC DNA]</scope>
</reference>
<reference key="2">
    <citation type="journal article" date="1985" name="Nucleic Acids Res.">
        <title>Mapping and 5' end determination of kinetoplast maxicircle gene transcripts from Leishmania tarentolae.</title>
        <authorList>
            <person name="Simpson A.M."/>
            <person name="Necklemann N."/>
            <person name="la Cruz V.F."/>
            <person name="Muhich M.L."/>
            <person name="Simpson L."/>
        </authorList>
    </citation>
    <scope>NUCLEOTIDE SEQUENCE [GENOMIC DNA]</scope>
</reference>
<reference key="3">
    <citation type="journal article" date="1989" name="Proc. Natl. Acad. Sci. U.S.A.">
        <title>Internal frameshifts within the mitochondrial genes for cytochrome oxidase subunit II and maxicircle unidentified reading frame 3 of Leishmania tarentolae are corrected by RNA editing: evidence for translation of the edited cytochrome oxidase subunit II mRNA.</title>
        <authorList>
            <person name="Shaw J."/>
            <person name="Campbell D."/>
            <person name="Simpson L."/>
        </authorList>
    </citation>
    <scope>RNA EDITING</scope>
</reference>
<feature type="chain" id="PRO_0000183616" description="Cytochrome c oxidase subunit 2">
    <location>
        <begin position="1"/>
        <end position="210"/>
    </location>
</feature>
<feature type="topological domain" description="Mitochondrial intermembrane" evidence="2">
    <location>
        <begin position="1"/>
        <end position="20"/>
    </location>
</feature>
<feature type="transmembrane region" description="Helical" evidence="2">
    <location>
        <begin position="21"/>
        <end position="42"/>
    </location>
</feature>
<feature type="topological domain" description="Mitochondrial matrix" evidence="2">
    <location>
        <begin position="43"/>
        <end position="60"/>
    </location>
</feature>
<feature type="transmembrane region" description="Helical" evidence="2">
    <location>
        <begin position="61"/>
        <end position="86"/>
    </location>
</feature>
<feature type="topological domain" description="Mitochondrial intermembrane" evidence="2">
    <location>
        <begin position="87"/>
        <end position="210"/>
    </location>
</feature>
<feature type="binding site" evidence="1">
    <location>
        <position position="157"/>
    </location>
    <ligand>
        <name>Cu cation</name>
        <dbReference type="ChEBI" id="CHEBI:23378"/>
        <label>A1</label>
    </ligand>
</feature>
<feature type="binding site" evidence="1">
    <location>
        <position position="192"/>
    </location>
    <ligand>
        <name>Cu cation</name>
        <dbReference type="ChEBI" id="CHEBI:23378"/>
        <label>A1</label>
    </ligand>
</feature>
<feature type="binding site" evidence="1">
    <location>
        <position position="192"/>
    </location>
    <ligand>
        <name>Cu cation</name>
        <dbReference type="ChEBI" id="CHEBI:23378"/>
        <label>A2</label>
    </ligand>
</feature>
<feature type="binding site" evidence="1">
    <location>
        <position position="194"/>
    </location>
    <ligand>
        <name>Cu cation</name>
        <dbReference type="ChEBI" id="CHEBI:23378"/>
        <label>A2</label>
    </ligand>
</feature>
<feature type="binding site" evidence="1">
    <location>
        <position position="194"/>
    </location>
    <ligand>
        <name>Mg(2+)</name>
        <dbReference type="ChEBI" id="CHEBI:18420"/>
        <note>ligand shared with subunit 1</note>
    </ligand>
</feature>
<feature type="binding site" evidence="1">
    <location>
        <position position="196"/>
    </location>
    <ligand>
        <name>Cu cation</name>
        <dbReference type="ChEBI" id="CHEBI:23378"/>
        <label>A1</label>
    </ligand>
</feature>
<feature type="binding site" evidence="1">
    <location>
        <position position="196"/>
    </location>
    <ligand>
        <name>Cu cation</name>
        <dbReference type="ChEBI" id="CHEBI:23378"/>
        <label>A2</label>
    </ligand>
</feature>
<feature type="binding site" evidence="1">
    <location>
        <position position="200"/>
    </location>
    <ligand>
        <name>Cu cation</name>
        <dbReference type="ChEBI" id="CHEBI:23378"/>
        <label>A2</label>
    </ligand>
</feature>
<feature type="binding site" evidence="1">
    <location>
        <position position="203"/>
    </location>
    <ligand>
        <name>Cu cation</name>
        <dbReference type="ChEBI" id="CHEBI:23378"/>
        <label>A1</label>
    </ligand>
</feature>
<accession>P14545</accession>
<sequence>MAFILSFWMIFLLDSVIVLLSFVCFVCVWICALLFSTVLLVSKLNNIYCTWDFTASKFIDVYWFTIGGMFSLGLLLRLCLLLYFGHLNFVSFDLCKVVGFQWYWVYFIFGETTIFSNLILESDYMIGDLRLLQCNHVLTLLSLVIYKLWLSAVDVIHSFAISSLGVKVDCIPGRCNEIVLFSSNNATVYGQCSELCGVLHGFMPIVICFI</sequence>
<keyword id="KW-0186">Copper</keyword>
<keyword id="KW-0249">Electron transport</keyword>
<keyword id="KW-0460">Magnesium</keyword>
<keyword id="KW-0472">Membrane</keyword>
<keyword id="KW-0479">Metal-binding</keyword>
<keyword id="KW-0496">Mitochondrion</keyword>
<keyword id="KW-0999">Mitochondrion inner membrane</keyword>
<keyword id="KW-0679">Respiratory chain</keyword>
<keyword id="KW-0691">RNA editing</keyword>
<keyword id="KW-1278">Translocase</keyword>
<keyword id="KW-0812">Transmembrane</keyword>
<keyword id="KW-1133">Transmembrane helix</keyword>
<keyword id="KW-0813">Transport</keyword>
<geneLocation type="mitochondrion"/>
<protein>
    <recommendedName>
        <fullName>Cytochrome c oxidase subunit 2</fullName>
        <ecNumber>7.1.1.9</ecNumber>
    </recommendedName>
    <alternativeName>
        <fullName>Cytochrome c oxidase polypeptide II</fullName>
    </alternativeName>
</protein>
<evidence type="ECO:0000250" key="1">
    <source>
        <dbReference type="UniProtKB" id="P00410"/>
    </source>
</evidence>
<evidence type="ECO:0000255" key="2"/>
<evidence type="ECO:0000269" key="3">
    <source>
    </source>
</evidence>
<evidence type="ECO:0000305" key="4"/>